<organism>
    <name type="scientific">Pseudomonas phage PaMx11</name>
    <dbReference type="NCBI Taxonomy" id="1175657"/>
    <lineage>
        <taxon>Viruses</taxon>
        <taxon>Duplodnaviria</taxon>
        <taxon>Heunggongvirae</taxon>
        <taxon>Uroviricota</taxon>
        <taxon>Caudoviricetes</taxon>
        <taxon>Mesyanzhinovviridae</taxon>
        <taxon>Bradleyvirinae</taxon>
        <taxon>Abidjanvirus</taxon>
        <taxon>Pseudomonas virus PaMx11</taxon>
    </lineage>
</organism>
<gene>
    <name evidence="4" type="ORF">PaMx11_46</name>
</gene>
<proteinExistence type="evidence at protein level"/>
<sequence length="292" mass="33417">MSRNYEKLSIEEFGAHLLGTVDLDPIYLALRRMELPEAQLNRWLLAYWCLYNGGEASYLSEFEGREFFEMLNHAAENVREAPIGGRWPRGAERRHWRGAQATSSVEYLIDRYDDRPEDMAAYCAGQGGTFLEVTKRVQEHRLFGPWIGFKVADMVDRVLGKPVSFDNAAVFMFKDPYKAACIQYEVNPNIPDHVLADGSVAPRNRELVTPETVHHVAQHLIEHFKGFQAPPLGDRPVNIQEVETILCKWKSHQNGHYPLFKDIVEIREAALPWAKVSKTAQAFFEAMPEVTQ</sequence>
<organismHost>
    <name type="scientific">Pseudomonas aeruginosa</name>
    <dbReference type="NCBI Taxonomy" id="287"/>
</organismHost>
<evidence type="ECO:0000269" key="1">
    <source>
    </source>
</evidence>
<evidence type="ECO:0000303" key="2">
    <source>
    </source>
</evidence>
<evidence type="ECO:0000305" key="3"/>
<evidence type="ECO:0000312" key="4">
    <source>
        <dbReference type="EMBL" id="ALH23720.1"/>
    </source>
</evidence>
<evidence type="ECO:0007829" key="5">
    <source>
        <dbReference type="PDB" id="8Z2M"/>
    </source>
</evidence>
<reference key="1">
    <citation type="journal article" date="2012" name="Appl. Environ. Microbiol.">
        <title>High Diversity and Novel Species of Pseudomonas aeruginosa Bacteriophages.</title>
        <authorList>
            <person name="Sepulveda-Robles O."/>
            <person name="Kameyama L."/>
            <person name="Guarneros G."/>
        </authorList>
    </citation>
    <scope>NUCLEOTIDE SEQUENCE [LARGE SCALE GENOMIC DNA]</scope>
</reference>
<reference key="2">
    <citation type="journal article" date="2021" name="Nucleic Acids Res.">
        <title>Pathways of thymidine hypermodification.</title>
        <authorList>
            <person name="Lee Y.J."/>
            <person name="Dai N."/>
            <person name="Mueller S.I."/>
            <person name="Guan C."/>
            <person name="Parker M.J."/>
            <person name="Fraser M.E."/>
            <person name="Walsh S.E."/>
            <person name="Sridar J."/>
            <person name="Mulholland A."/>
            <person name="Nayak K."/>
            <person name="Sun Z."/>
            <person name="Lin Y.C."/>
            <person name="Comb D.G."/>
            <person name="Marks K."/>
            <person name="Gonzalez R."/>
            <person name="Dowling D.P."/>
            <person name="Bandarian V."/>
            <person name="Saleh L."/>
            <person name="Correa I.R."/>
            <person name="Weigele P.R."/>
        </authorList>
    </citation>
    <scope>FUNCTION</scope>
    <scope>CATALYTIC ACTIVITY</scope>
</reference>
<accession>A0A0S0MVI5</accession>
<keyword id="KW-0002">3D-structure</keyword>
<keyword id="KW-0945">Host-virus interaction</keyword>
<keyword id="KW-1090">Inhibition of host innate immune response by virus</keyword>
<keyword id="KW-1185">Reference proteome</keyword>
<keyword id="KW-1258">Restriction-modification system evasion by virus</keyword>
<keyword id="KW-0808">Transferase</keyword>
<keyword id="KW-0899">Viral immunoevasion</keyword>
<dbReference type="EMBL" id="JQ067087">
    <property type="protein sequence ID" value="ALH23720.1"/>
    <property type="molecule type" value="Genomic_DNA"/>
</dbReference>
<dbReference type="RefSeq" id="YP_009196299.1">
    <property type="nucleotide sequence ID" value="NC_028770.1"/>
</dbReference>
<dbReference type="PDB" id="8Z2M">
    <property type="method" value="X-ray"/>
    <property type="resolution" value="2.00 A"/>
    <property type="chains" value="A=1-292"/>
</dbReference>
<dbReference type="PDB" id="8Z2N">
    <property type="method" value="X-ray"/>
    <property type="resolution" value="2.30 A"/>
    <property type="chains" value="B/CA00=1-292"/>
</dbReference>
<dbReference type="PDBsum" id="8Z2M"/>
<dbReference type="PDBsum" id="8Z2N"/>
<dbReference type="SMR" id="A0A0S0MVI5"/>
<dbReference type="GeneID" id="26623524"/>
<dbReference type="KEGG" id="vg:26623524"/>
<dbReference type="OrthoDB" id="4516at10239"/>
<dbReference type="Proteomes" id="UP000204009">
    <property type="component" value="Genome"/>
</dbReference>
<dbReference type="GO" id="GO:0016740">
    <property type="term" value="F:transferase activity"/>
    <property type="evidence" value="ECO:0007669"/>
    <property type="project" value="UniProtKB-KW"/>
</dbReference>
<dbReference type="GO" id="GO:0099018">
    <property type="term" value="P:symbiont-mediated evasion of host restriction-modification system"/>
    <property type="evidence" value="ECO:0007669"/>
    <property type="project" value="UniProtKB-KW"/>
</dbReference>
<dbReference type="GO" id="GO:0052170">
    <property type="term" value="P:symbiont-mediated suppression of host innate immune response"/>
    <property type="evidence" value="ECO:0007669"/>
    <property type="project" value="UniProtKB-KW"/>
</dbReference>
<dbReference type="InterPro" id="IPR040741">
    <property type="entry name" value="ADDT"/>
</dbReference>
<dbReference type="Pfam" id="PF18724">
    <property type="entry name" value="ADDT"/>
    <property type="match status" value="1"/>
</dbReference>
<protein>
    <recommendedName>
        <fullName evidence="3">Glycinyltransferase</fullName>
    </recommendedName>
    <alternativeName>
        <fullName evidence="2">Amino acid:DNA transferase</fullName>
        <shortName evidence="2">AADT</shortName>
    </alternativeName>
    <alternativeName>
        <fullName evidence="2">gp46</fullName>
    </alternativeName>
</protein>
<comment type="function">
    <text evidence="1">Transfers glycine to 5-phosphomethyl-2'-deoxyuridine (5-PmdU) to produce 5-Nalpha-glycinylthymidine (Nalpha-GlyT) on DNA as a step in the pathway leading to thymidine hypermodifications in the viral genome (PubMed:34522950). As a final result of the pathway of hypermodification, 5-acetylaminomethyl-2'-deoxyuridine (5-AcNmdU) substitutes for a subset of thymidines in the viral DNA (PubMed:34522950). These modifications probably prevent degradation of viral genome by the host restriction-modification antiviral defense system (PubMed:34522950).</text>
</comment>
<comment type="catalytic activity">
    <reaction evidence="1">
        <text>5-phosphomethyl-dUMP in DNA + glycine = 5-N(alpha)-glycyl-dTMP in DNA + phosphate</text>
        <dbReference type="Rhea" id="RHEA:71547"/>
        <dbReference type="Rhea" id="RHEA-COMP:18039"/>
        <dbReference type="Rhea" id="RHEA-COMP:18040"/>
        <dbReference type="ChEBI" id="CHEBI:43474"/>
        <dbReference type="ChEBI" id="CHEBI:57305"/>
        <dbReference type="ChEBI" id="CHEBI:190918"/>
        <dbReference type="ChEBI" id="CHEBI:190919"/>
    </reaction>
</comment>
<comment type="similarity">
    <text evidence="3">Belongs to the thymidine aminotransferase family.</text>
</comment>
<feature type="chain" id="PRO_0000456273" description="Glycinyltransferase">
    <location>
        <begin position="1"/>
        <end position="292"/>
    </location>
</feature>
<feature type="helix" evidence="5">
    <location>
        <begin position="10"/>
        <end position="20"/>
    </location>
</feature>
<feature type="helix" evidence="5">
    <location>
        <begin position="25"/>
        <end position="33"/>
    </location>
</feature>
<feature type="helix" evidence="5">
    <location>
        <begin position="37"/>
        <end position="50"/>
    </location>
</feature>
<feature type="helix" evidence="5">
    <location>
        <begin position="53"/>
        <end position="60"/>
    </location>
</feature>
<feature type="helix" evidence="5">
    <location>
        <begin position="64"/>
        <end position="76"/>
    </location>
</feature>
<feature type="helix" evidence="5">
    <location>
        <begin position="91"/>
        <end position="93"/>
    </location>
</feature>
<feature type="helix" evidence="5">
    <location>
        <begin position="98"/>
        <end position="112"/>
    </location>
</feature>
<feature type="helix" evidence="5">
    <location>
        <begin position="118"/>
        <end position="124"/>
    </location>
</feature>
<feature type="helix" evidence="5">
    <location>
        <begin position="130"/>
        <end position="138"/>
    </location>
</feature>
<feature type="helix" evidence="5">
    <location>
        <begin position="145"/>
        <end position="157"/>
    </location>
</feature>
<feature type="helix" evidence="5">
    <location>
        <begin position="167"/>
        <end position="171"/>
    </location>
</feature>
<feature type="helix" evidence="5">
    <location>
        <begin position="174"/>
        <end position="186"/>
    </location>
</feature>
<feature type="helix" evidence="5">
    <location>
        <begin position="205"/>
        <end position="207"/>
    </location>
</feature>
<feature type="helix" evidence="5">
    <location>
        <begin position="210"/>
        <end position="224"/>
    </location>
</feature>
<feature type="turn" evidence="5">
    <location>
        <begin position="230"/>
        <end position="233"/>
    </location>
</feature>
<feature type="helix" evidence="5">
    <location>
        <begin position="239"/>
        <end position="253"/>
    </location>
</feature>
<feature type="helix" evidence="5">
    <location>
        <begin position="261"/>
        <end position="274"/>
    </location>
</feature>
<feature type="helix" evidence="5">
    <location>
        <begin position="278"/>
        <end position="286"/>
    </location>
</feature>
<name>GLYDT_BPPAM</name>